<dbReference type="EMBL" id="BC061826">
    <property type="protein sequence ID" value="AAH61826.1"/>
    <property type="molecule type" value="mRNA"/>
</dbReference>
<dbReference type="EMBL" id="CK366762">
    <property type="status" value="NOT_ANNOTATED_CDS"/>
    <property type="molecule type" value="mRNA"/>
</dbReference>
<dbReference type="EMBL" id="CB724981">
    <property type="status" value="NOT_ANNOTATED_CDS"/>
    <property type="molecule type" value="mRNA"/>
</dbReference>
<dbReference type="RefSeq" id="NP_001386017.1">
    <molecule id="Q6P756-1"/>
    <property type="nucleotide sequence ID" value="NM_001399088.1"/>
</dbReference>
<dbReference type="RefSeq" id="NP_954527.2">
    <molecule id="Q6P756-2"/>
    <property type="nucleotide sequence ID" value="NM_199096.2"/>
</dbReference>
<dbReference type="RefSeq" id="XP_006239241.1">
    <property type="nucleotide sequence ID" value="XM_006239179.3"/>
</dbReference>
<dbReference type="SMR" id="Q6P756"/>
<dbReference type="BioGRID" id="255956">
    <property type="interactions" value="5"/>
</dbReference>
<dbReference type="FunCoup" id="Q6P756">
    <property type="interactions" value="3696"/>
</dbReference>
<dbReference type="STRING" id="10116.ENSRNOP00000011394"/>
<dbReference type="iPTMnet" id="Q6P756"/>
<dbReference type="PhosphoSitePlus" id="Q6P756"/>
<dbReference type="PaxDb" id="10116-ENSRNOP00000011394"/>
<dbReference type="Ensembl" id="ENSRNOT00000100304.1">
    <molecule id="Q6P756-1"/>
    <property type="protein sequence ID" value="ENSRNOP00000095787.1"/>
    <property type="gene ID" value="ENSRNOG00000008427.6"/>
</dbReference>
<dbReference type="GeneID" id="298598"/>
<dbReference type="KEGG" id="rno:298598"/>
<dbReference type="UCSC" id="RGD:735063">
    <molecule id="Q6P756-1"/>
    <property type="organism name" value="rat"/>
</dbReference>
<dbReference type="AGR" id="RGD:735063"/>
<dbReference type="CTD" id="55707"/>
<dbReference type="RGD" id="735063">
    <property type="gene designation" value="Necap2"/>
</dbReference>
<dbReference type="eggNOG" id="KOG2500">
    <property type="taxonomic scope" value="Eukaryota"/>
</dbReference>
<dbReference type="GeneTree" id="ENSGT00390000009359"/>
<dbReference type="HOGENOM" id="CLU_069884_1_0_1"/>
<dbReference type="InParanoid" id="Q6P756"/>
<dbReference type="PhylomeDB" id="Q6P756"/>
<dbReference type="TreeFam" id="TF314482"/>
<dbReference type="Reactome" id="R-RNO-8856825">
    <property type="pathway name" value="Cargo recognition for clathrin-mediated endocytosis"/>
</dbReference>
<dbReference type="Reactome" id="R-RNO-8856828">
    <property type="pathway name" value="Clathrin-mediated endocytosis"/>
</dbReference>
<dbReference type="PRO" id="PR:Q6P756"/>
<dbReference type="Proteomes" id="UP000002494">
    <property type="component" value="Chromosome 5"/>
</dbReference>
<dbReference type="Bgee" id="ENSRNOG00000008427">
    <property type="expression patterns" value="Expressed in thymus and 20 other cell types or tissues"/>
</dbReference>
<dbReference type="GO" id="GO:0030125">
    <property type="term" value="C:clathrin vesicle coat"/>
    <property type="evidence" value="ECO:0000250"/>
    <property type="project" value="UniProtKB"/>
</dbReference>
<dbReference type="GO" id="GO:0005905">
    <property type="term" value="C:clathrin-coated pit"/>
    <property type="evidence" value="ECO:0000250"/>
    <property type="project" value="UniProtKB"/>
</dbReference>
<dbReference type="GO" id="GO:0005886">
    <property type="term" value="C:plasma membrane"/>
    <property type="evidence" value="ECO:0007669"/>
    <property type="project" value="UniProtKB-SubCell"/>
</dbReference>
<dbReference type="GO" id="GO:0006897">
    <property type="term" value="P:endocytosis"/>
    <property type="evidence" value="ECO:0000250"/>
    <property type="project" value="UniProtKB"/>
</dbReference>
<dbReference type="GO" id="GO:0015031">
    <property type="term" value="P:protein transport"/>
    <property type="evidence" value="ECO:0007669"/>
    <property type="project" value="UniProtKB-KW"/>
</dbReference>
<dbReference type="GO" id="GO:0016192">
    <property type="term" value="P:vesicle-mediated transport"/>
    <property type="evidence" value="ECO:0000318"/>
    <property type="project" value="GO_Central"/>
</dbReference>
<dbReference type="CDD" id="cd13228">
    <property type="entry name" value="PHear_NECAP"/>
    <property type="match status" value="1"/>
</dbReference>
<dbReference type="FunFam" id="2.30.29.30:FF:000064">
    <property type="entry name" value="Adaptin ear-binding coat-associated protein 1"/>
    <property type="match status" value="1"/>
</dbReference>
<dbReference type="Gene3D" id="2.30.29.30">
    <property type="entry name" value="Pleckstrin-homology domain (PH domain)/Phosphotyrosine-binding domain (PTB)"/>
    <property type="match status" value="1"/>
</dbReference>
<dbReference type="InterPro" id="IPR012466">
    <property type="entry name" value="NECAP_PHear"/>
</dbReference>
<dbReference type="InterPro" id="IPR011993">
    <property type="entry name" value="PH-like_dom_sf"/>
</dbReference>
<dbReference type="PANTHER" id="PTHR12847:SF16">
    <property type="entry name" value="ADAPTIN EAR-BINDING COAT-ASSOCIATED PROTEIN 2"/>
    <property type="match status" value="1"/>
</dbReference>
<dbReference type="PANTHER" id="PTHR12847">
    <property type="entry name" value="ATP-BINDING CASSETTE ABC TRANSPORTER-RELATED"/>
    <property type="match status" value="1"/>
</dbReference>
<dbReference type="Pfam" id="PF07933">
    <property type="entry name" value="DUF1681"/>
    <property type="match status" value="1"/>
</dbReference>
<dbReference type="SUPFAM" id="SSF50729">
    <property type="entry name" value="PH domain-like"/>
    <property type="match status" value="1"/>
</dbReference>
<comment type="function">
    <text evidence="1">Involved in endocytosis.</text>
</comment>
<comment type="subunit">
    <text evidence="1">Interacts with AP1G1 and AP2A1 components of the adapter protein complexes AP-1 and AP-2. Interacts with the GAE domain proteins GGA1, GGA2 and GGA3 (By similarity).</text>
</comment>
<comment type="subcellular location">
    <subcellularLocation>
        <location evidence="4">Cytoplasmic vesicle</location>
        <location evidence="4">Clathrin-coated vesicle membrane</location>
    </subcellularLocation>
    <subcellularLocation>
        <location evidence="4">Cell membrane</location>
    </subcellularLocation>
    <text evidence="1">Partially colocalizes with AP-2 at the plasma membrane.</text>
</comment>
<comment type="alternative products">
    <event type="alternative splicing"/>
    <isoform>
        <id>Q6P756-1</id>
        <name>1</name>
        <sequence type="displayed"/>
    </isoform>
    <isoform>
        <id>Q6P756-2</id>
        <name>2</name>
        <sequence type="described" ref="VSP_013237"/>
    </isoform>
</comment>
<comment type="tissue specificity">
    <text evidence="4">Expressed in brain, heart, kidney, liver and lung (at protein level).</text>
</comment>
<comment type="domain">
    <text evidence="1">The WXXF motifs mediate binding of accessory proteins to the ear-domain of AP-1, GGAs and AP-2 through hydrophobic interactions. Selective binding to the GAE domains of AP-1 or to the alpha-ear domain of AP-2 is tuned by the acidic context surrounding the motif and the properties of the second residue of the motif itself (By similarity).</text>
</comment>
<comment type="similarity">
    <text evidence="6">Belongs to the NECAP family.</text>
</comment>
<name>NECP2_RAT</name>
<protein>
    <recommendedName>
        <fullName>Adaptin ear-binding coat-associated protein 2</fullName>
        <shortName>NECAP-2</shortName>
    </recommendedName>
</protein>
<feature type="chain" id="PRO_0000213073" description="Adaptin ear-binding coat-associated protein 2">
    <location>
        <begin position="1"/>
        <end position="263"/>
    </location>
</feature>
<feature type="region of interest" description="Disordered" evidence="3">
    <location>
        <begin position="167"/>
        <end position="191"/>
    </location>
</feature>
<feature type="region of interest" description="Disordered" evidence="3">
    <location>
        <begin position="209"/>
        <end position="263"/>
    </location>
</feature>
<feature type="short sequence motif" description="WXXF motif 1">
    <location>
        <begin position="218"/>
        <end position="221"/>
    </location>
</feature>
<feature type="short sequence motif" description="WXXF motif 2">
    <location>
        <begin position="238"/>
        <end position="241"/>
    </location>
</feature>
<feature type="compositionally biased region" description="Low complexity" evidence="3">
    <location>
        <begin position="246"/>
        <end position="263"/>
    </location>
</feature>
<feature type="modified residue" description="Phosphoserine" evidence="2">
    <location>
        <position position="181"/>
    </location>
</feature>
<feature type="splice variant" id="VSP_013237" description="In isoform 2." evidence="5">
    <original>MEESEYESVLCVKPEVHVYRIPPRATNRGYRASEWQLDQPSWSGRLRITAKGKVAYIKLEDRTSGELFAQ</original>
    <variation>MSTASRRGPPTVVTGPQNGNWTSHPGVAGCGSLRKGRWPTSSWRTGPL</variation>
    <location>
        <begin position="1"/>
        <end position="70"/>
    </location>
</feature>
<keyword id="KW-0025">Alternative splicing</keyword>
<keyword id="KW-1003">Cell membrane</keyword>
<keyword id="KW-0968">Cytoplasmic vesicle</keyword>
<keyword id="KW-0254">Endocytosis</keyword>
<keyword id="KW-0472">Membrane</keyword>
<keyword id="KW-0597">Phosphoprotein</keyword>
<keyword id="KW-0653">Protein transport</keyword>
<keyword id="KW-1185">Reference proteome</keyword>
<keyword id="KW-0677">Repeat</keyword>
<keyword id="KW-0813">Transport</keyword>
<organism>
    <name type="scientific">Rattus norvegicus</name>
    <name type="common">Rat</name>
    <dbReference type="NCBI Taxonomy" id="10116"/>
    <lineage>
        <taxon>Eukaryota</taxon>
        <taxon>Metazoa</taxon>
        <taxon>Chordata</taxon>
        <taxon>Craniata</taxon>
        <taxon>Vertebrata</taxon>
        <taxon>Euteleostomi</taxon>
        <taxon>Mammalia</taxon>
        <taxon>Eutheria</taxon>
        <taxon>Euarchontoglires</taxon>
        <taxon>Glires</taxon>
        <taxon>Rodentia</taxon>
        <taxon>Myomorpha</taxon>
        <taxon>Muroidea</taxon>
        <taxon>Muridae</taxon>
        <taxon>Murinae</taxon>
        <taxon>Rattus</taxon>
    </lineage>
</organism>
<reference key="1">
    <citation type="journal article" date="2004" name="Genome Res.">
        <title>The status, quality, and expansion of the NIH full-length cDNA project: the Mammalian Gene Collection (MGC).</title>
        <authorList>
            <consortium name="The MGC Project Team"/>
        </authorList>
    </citation>
    <scope>NUCLEOTIDE SEQUENCE [LARGE SCALE MRNA] (ISOFORM 2)</scope>
    <source>
        <tissue>Prostate</tissue>
    </source>
</reference>
<reference key="2">
    <citation type="journal article" date="2004" name="Proc. Natl. Acad. Sci. U.S.A.">
        <title>Identification and analysis of plasticity-induced late-response genes.</title>
        <authorList>
            <person name="Hong S.J."/>
            <person name="Li H."/>
            <person name="Becker K.G."/>
            <person name="Dawson V.L."/>
            <person name="Dawson T.M."/>
        </authorList>
    </citation>
    <scope>NUCLEOTIDE SEQUENCE [MRNA] OF 1-182 (ISOFORM 1)</scope>
</reference>
<reference key="3">
    <citation type="journal article" date="2003" name="EMBO Rep.">
        <title>Identification of a family of endocytic proteins that define a new alpha-adaptin ear-binding motif.</title>
        <authorList>
            <person name="Ritter B."/>
            <person name="Philie J."/>
            <person name="Girard M."/>
            <person name="Tung E.C."/>
            <person name="Blondeau F."/>
            <person name="McPherson P.S."/>
        </authorList>
    </citation>
    <scope>SUBCELLULAR LOCATION</scope>
    <scope>TISSUE SPECIFICITY</scope>
</reference>
<evidence type="ECO:0000250" key="1"/>
<evidence type="ECO:0000250" key="2">
    <source>
        <dbReference type="UniProtKB" id="Q9NVZ3"/>
    </source>
</evidence>
<evidence type="ECO:0000256" key="3">
    <source>
        <dbReference type="SAM" id="MobiDB-lite"/>
    </source>
</evidence>
<evidence type="ECO:0000269" key="4">
    <source>
    </source>
</evidence>
<evidence type="ECO:0000303" key="5">
    <source>
    </source>
</evidence>
<evidence type="ECO:0000305" key="6"/>
<proteinExistence type="evidence at protein level"/>
<accession>Q6P756</accession>
<sequence>MEESEYESVLCVKPEVHVYRIPPRATNRGYRASEWQLDQPSWSGRLRITAKGKVAYIKLEDRTSGELFAQAPVDQFPGTAVESVTDSSRYFVIRIEDGNGRRAFIGIGFGDRGDAFDFNVALQDHFKWVKQQCEFAKQAQNPDEGPKLDLGFKEGQTIKINIANMRKKEGAAGAPRTRPASAGGLSLLPPPPGGKMSTLIPPSGEQFSGGSLVQPVSGSGGATELWPQSKPAAAATADIWGDFTKSTGSPSSQSQPGTGWVQF</sequence>
<gene>
    <name type="primary">Necap2</name>
</gene>